<comment type="function">
    <text>Catalyzes the NAD- or NADP-dependent conversion of 3-hydroxybenzoate to gentisate. The affinity of the enzyme toward NAD is twice as high as for NADP. The enzyme shows higher specific activities against the intermediates in the degradation of 2,5-xylenol and 3,5-xylenol, 3-hydroxy-4-methylbenzoate and 3-hydroxy-5-methylbenzoate, respectively, than for 3-hydroxybenzoate. It also shows activity against 3-substituted benzoates.</text>
</comment>
<comment type="catalytic activity">
    <reaction evidence="2">
        <text>3-hydroxybenzoate + NADH + O2 + H(+) = 2,5-dihydroxybenzoate + NAD(+) + H2O</text>
        <dbReference type="Rhea" id="RHEA:22692"/>
        <dbReference type="ChEBI" id="CHEBI:15377"/>
        <dbReference type="ChEBI" id="CHEBI:15378"/>
        <dbReference type="ChEBI" id="CHEBI:15379"/>
        <dbReference type="ChEBI" id="CHEBI:16193"/>
        <dbReference type="ChEBI" id="CHEBI:57540"/>
        <dbReference type="ChEBI" id="CHEBI:57945"/>
        <dbReference type="ChEBI" id="CHEBI:58044"/>
        <dbReference type="EC" id="1.14.13.24"/>
    </reaction>
</comment>
<comment type="cofactor">
    <cofactor evidence="2">
        <name>FAD</name>
        <dbReference type="ChEBI" id="CHEBI:57692"/>
    </cofactor>
</comment>
<comment type="activity regulation">
    <text evidence="2">Inhibited by manganese, copper, mercury, and iron ions.</text>
</comment>
<comment type="biophysicochemical properties">
    <kinetics>
        <KM evidence="2">79 uM for 3-hydroxybenzoate (with NAD as cosubstrate)</KM>
        <KM evidence="2">108 uM for 3-hydroxybenzoate (with NADP as cosubstrate)</KM>
        <KM evidence="2">95 uM for 3-hydroxy-4-methylbenzoate (with NAD as cosubstrate)</KM>
        <KM evidence="2">71 uM for 3-hydroxy-4-methylbenzoate (with NADP as cosubstrate)</KM>
        <KM evidence="2">112 uM for NADH</KM>
        <KM evidence="2">225 uM for NADPH</KM>
    </kinetics>
    <phDependence>
        <text evidence="2">Optimum pH is 7.5.</text>
    </phDependence>
    <temperatureDependence>
        <text evidence="2">Optimum temperature is 25 degrees Celsius.</text>
    </temperatureDependence>
</comment>
<comment type="subunit">
    <text evidence="2">Homotrimer.</text>
</comment>
<comment type="induction">
    <text evidence="1">Constitutively expressed. Up-regulated by aromatic substrates, the best one being 3-hydroxybenzoate.</text>
</comment>
<comment type="similarity">
    <text evidence="3">Belongs to the 3-hydroxybenzoate 6-hydroxylase family.</text>
</comment>
<reference key="1">
    <citation type="journal article" date="2003" name="Gene">
        <title>Molecular characterization of an inducible gentisate 1,2-dioxygenase gene, xlnE, from Pseudomonas alcaligenes NCIMB 9867.</title>
        <authorList>
            <person name="Yeo C.C."/>
            <person name="Wong M.V.-M."/>
            <person name="Feng Y."/>
            <person name="Song K.P."/>
            <person name="Poh C.L."/>
        </authorList>
    </citation>
    <scope>NUCLEOTIDE SEQUENCE [GENOMIC DNA]</scope>
    <scope>INDUCTION</scope>
    <source>
        <strain>NCIMB 9867 / P25X</strain>
    </source>
</reference>
<reference key="2">
    <citation type="journal article" date="2005" name="J. Bacteriol.">
        <title>Molecular and biochemical characterization of the xlnD-encoded 3-hydroxybenzoate 6-hydroxylase involved in the degradation of 2,5-xylenol via the gentisate pathway in Pseudomonas alcaligenes NCIMB 9867.</title>
        <authorList>
            <person name="Gao X."/>
            <person name="Tan C.L."/>
            <person name="Yeo C.C."/>
            <person name="Poh C.L."/>
        </authorList>
    </citation>
    <scope>CATALYTIC ACTIVITY</scope>
    <scope>SUBSTRATE SPECIFICITY</scope>
    <scope>BIOPHYSICOCHEMICAL PROPERTIES</scope>
    <scope>SUBUNIT</scope>
    <scope>COFACTOR</scope>
    <scope>ACTIVITY REGULATION</scope>
    <source>
        <strain>NCIMB 9867 / P25X</strain>
    </source>
</reference>
<keyword id="KW-0058">Aromatic hydrocarbons catabolism</keyword>
<keyword id="KW-0274">FAD</keyword>
<keyword id="KW-0285">Flavoprotein</keyword>
<keyword id="KW-0503">Monooxygenase</keyword>
<keyword id="KW-0520">NAD</keyword>
<keyword id="KW-0521">NADP</keyword>
<keyword id="KW-0560">Oxidoreductase</keyword>
<sequence length="394" mass="43435">MHNNILIAGAGIGGLSAALGLARKGMRSIVLEKAPELGEIGAGIQLAPNAYHALDALGIGEVARQTGVHVDKLLWMDGMTDKEIASVPLANRFREFFGNPYAVIHRADFHGLLVEACHKTGLVEVRTNAEVVDYENFPDRVEAILHDGSCINGAVLVGADGLWSNVRQKVIGDGDPRVSGHTTYRSVIPAEDMPEELRWNMSTAWAGEGCHMVHYPLKGGKVFNLVLTSNSGASEPEAGVPVTTDEVFEKFKTMKRRPTSLIHKGNNWKRWVLCDRDPLPNWVDGRVTLLGDAAHPMMQYMAQGASMAIEDAVCLAFELGREMDPVSALKKYNRARFARTARVQTYSRYASDFIYHAKGGAAAMRNELMGGMTPTDFFQWINWLYGKETVEKYK</sequence>
<organism>
    <name type="scientific">Aquipseudomonas alcaligenes</name>
    <name type="common">Pseudomonas alcaligenes</name>
    <dbReference type="NCBI Taxonomy" id="43263"/>
    <lineage>
        <taxon>Bacteria</taxon>
        <taxon>Pseudomonadati</taxon>
        <taxon>Pseudomonadota</taxon>
        <taxon>Gammaproteobacteria</taxon>
        <taxon>Pseudomonadales</taxon>
        <taxon>Pseudomonadaceae</taxon>
        <taxon>Aquipseudomonas</taxon>
    </lineage>
</organism>
<name>3HBH1_AQUAC</name>
<gene>
    <name type="primary">xlnD</name>
</gene>
<accession>Q9F131</accession>
<proteinExistence type="evidence at protein level"/>
<evidence type="ECO:0000269" key="1">
    <source>
    </source>
</evidence>
<evidence type="ECO:0000269" key="2">
    <source>
    </source>
</evidence>
<evidence type="ECO:0000305" key="3"/>
<feature type="chain" id="PRO_0000382700" description="3-hydroxybenzoate 6-hydroxylase 1">
    <location>
        <begin position="1"/>
        <end position="394"/>
    </location>
</feature>
<protein>
    <recommendedName>
        <fullName>3-hydroxybenzoate 6-hydroxylase 1</fullName>
        <ecNumber>1.14.13.24</ecNumber>
    </recommendedName>
    <alternativeName>
        <fullName>Constitutive 3-hydroxybenzoate 6-hydroxylase</fullName>
    </alternativeName>
</protein>
<dbReference type="EC" id="1.14.13.24"/>
<dbReference type="EMBL" id="AF173167">
    <property type="protein sequence ID" value="AAG39455.1"/>
    <property type="molecule type" value="Genomic_DNA"/>
</dbReference>
<dbReference type="SMR" id="Q9F131"/>
<dbReference type="BioCyc" id="MetaCyc:MONOMER-14775"/>
<dbReference type="BRENDA" id="1.14.13.24">
    <property type="organism ID" value="5088"/>
</dbReference>
<dbReference type="SABIO-RK" id="Q9F131"/>
<dbReference type="GO" id="GO:0018669">
    <property type="term" value="F:3-hydroxybenzoate 6-monooxygenase activity"/>
    <property type="evidence" value="ECO:0007669"/>
    <property type="project" value="UniProtKB-EC"/>
</dbReference>
<dbReference type="GO" id="GO:0071949">
    <property type="term" value="F:FAD binding"/>
    <property type="evidence" value="ECO:0007669"/>
    <property type="project" value="InterPro"/>
</dbReference>
<dbReference type="GO" id="GO:0009056">
    <property type="term" value="P:catabolic process"/>
    <property type="evidence" value="ECO:0007669"/>
    <property type="project" value="UniProtKB-KW"/>
</dbReference>
<dbReference type="Gene3D" id="3.50.50.60">
    <property type="entry name" value="FAD/NAD(P)-binding domain"/>
    <property type="match status" value="1"/>
</dbReference>
<dbReference type="InterPro" id="IPR002938">
    <property type="entry name" value="FAD-bd"/>
</dbReference>
<dbReference type="InterPro" id="IPR050493">
    <property type="entry name" value="FAD-dep_Monooxygenase_BioMet"/>
</dbReference>
<dbReference type="InterPro" id="IPR036188">
    <property type="entry name" value="FAD/NAD-bd_sf"/>
</dbReference>
<dbReference type="NCBIfam" id="NF006021">
    <property type="entry name" value="PRK08163.1"/>
    <property type="match status" value="1"/>
</dbReference>
<dbReference type="PANTHER" id="PTHR13789:SF318">
    <property type="entry name" value="GERANYLGERANYL DIPHOSPHATE REDUCTASE"/>
    <property type="match status" value="1"/>
</dbReference>
<dbReference type="PANTHER" id="PTHR13789">
    <property type="entry name" value="MONOOXYGENASE"/>
    <property type="match status" value="1"/>
</dbReference>
<dbReference type="Pfam" id="PF01494">
    <property type="entry name" value="FAD_binding_3"/>
    <property type="match status" value="1"/>
</dbReference>
<dbReference type="PRINTS" id="PR00420">
    <property type="entry name" value="RNGMNOXGNASE"/>
</dbReference>
<dbReference type="SUPFAM" id="SSF54373">
    <property type="entry name" value="FAD-linked reductases, C-terminal domain"/>
    <property type="match status" value="1"/>
</dbReference>
<dbReference type="SUPFAM" id="SSF51905">
    <property type="entry name" value="FAD/NAD(P)-binding domain"/>
    <property type="match status" value="1"/>
</dbReference>